<protein>
    <recommendedName>
        <fullName evidence="1">Urease accessory protein UreG</fullName>
    </recommendedName>
</protein>
<accession>Q7VRS8</accession>
<feature type="chain" id="PRO_0000347348" description="Urease accessory protein UreG">
    <location>
        <begin position="1"/>
        <end position="209"/>
    </location>
</feature>
<feature type="binding site" evidence="1">
    <location>
        <begin position="16"/>
        <end position="23"/>
    </location>
    <ligand>
        <name>GTP</name>
        <dbReference type="ChEBI" id="CHEBI:37565"/>
    </ligand>
</feature>
<sequence>MSNDKAKHPMKVGIGGPVGSGKTALIEVLCKKMKTDYQLAVVTNDIYTKEDQQILINAHALESDRIIGVETGGCPHTAIREDVSMNLLAIEELIDKFNNLDIIFIESGGDNLSATFSPELSDWNLYVIDVAAGDKIPRKGGPGITKSDFLIINKIDLAQYVGASLDVMKFDTHTMRNNRPWTFTNLKTGYGIESVINFLREKKLINNKM</sequence>
<organism>
    <name type="scientific">Blochmanniella floridana</name>
    <dbReference type="NCBI Taxonomy" id="203907"/>
    <lineage>
        <taxon>Bacteria</taxon>
        <taxon>Pseudomonadati</taxon>
        <taxon>Pseudomonadota</taxon>
        <taxon>Gammaproteobacteria</taxon>
        <taxon>Enterobacterales</taxon>
        <taxon>Enterobacteriaceae</taxon>
        <taxon>ant endosymbionts</taxon>
        <taxon>Candidatus Blochmanniella</taxon>
    </lineage>
</organism>
<name>UREG_BLOFL</name>
<dbReference type="EMBL" id="BX248583">
    <property type="protein sequence ID" value="CAD83207.1"/>
    <property type="molecule type" value="Genomic_DNA"/>
</dbReference>
<dbReference type="SMR" id="Q7VRS8"/>
<dbReference type="STRING" id="203907.Bfl521"/>
<dbReference type="KEGG" id="bfl:Bfl521"/>
<dbReference type="eggNOG" id="COG0378">
    <property type="taxonomic scope" value="Bacteria"/>
</dbReference>
<dbReference type="HOGENOM" id="CLU_072144_1_0_6"/>
<dbReference type="OrthoDB" id="9802035at2"/>
<dbReference type="Proteomes" id="UP000002192">
    <property type="component" value="Chromosome"/>
</dbReference>
<dbReference type="GO" id="GO:0005737">
    <property type="term" value="C:cytoplasm"/>
    <property type="evidence" value="ECO:0007669"/>
    <property type="project" value="UniProtKB-SubCell"/>
</dbReference>
<dbReference type="GO" id="GO:0005525">
    <property type="term" value="F:GTP binding"/>
    <property type="evidence" value="ECO:0007669"/>
    <property type="project" value="UniProtKB-KW"/>
</dbReference>
<dbReference type="GO" id="GO:0003924">
    <property type="term" value="F:GTPase activity"/>
    <property type="evidence" value="ECO:0007669"/>
    <property type="project" value="InterPro"/>
</dbReference>
<dbReference type="GO" id="GO:0016151">
    <property type="term" value="F:nickel cation binding"/>
    <property type="evidence" value="ECO:0007669"/>
    <property type="project" value="UniProtKB-UniRule"/>
</dbReference>
<dbReference type="GO" id="GO:0043419">
    <property type="term" value="P:urea catabolic process"/>
    <property type="evidence" value="ECO:0007669"/>
    <property type="project" value="InterPro"/>
</dbReference>
<dbReference type="CDD" id="cd05540">
    <property type="entry name" value="UreG"/>
    <property type="match status" value="1"/>
</dbReference>
<dbReference type="FunFam" id="3.40.50.300:FF:000208">
    <property type="entry name" value="Urease accessory protein UreG"/>
    <property type="match status" value="1"/>
</dbReference>
<dbReference type="Gene3D" id="3.40.50.300">
    <property type="entry name" value="P-loop containing nucleotide triphosphate hydrolases"/>
    <property type="match status" value="1"/>
</dbReference>
<dbReference type="HAMAP" id="MF_01389">
    <property type="entry name" value="UreG"/>
    <property type="match status" value="1"/>
</dbReference>
<dbReference type="InterPro" id="IPR003495">
    <property type="entry name" value="CobW/HypB/UreG_nucleotide-bd"/>
</dbReference>
<dbReference type="InterPro" id="IPR027417">
    <property type="entry name" value="P-loop_NTPase"/>
</dbReference>
<dbReference type="InterPro" id="IPR004400">
    <property type="entry name" value="UreG"/>
</dbReference>
<dbReference type="NCBIfam" id="TIGR00101">
    <property type="entry name" value="ureG"/>
    <property type="match status" value="1"/>
</dbReference>
<dbReference type="PANTHER" id="PTHR31715">
    <property type="entry name" value="UREASE ACCESSORY PROTEIN G"/>
    <property type="match status" value="1"/>
</dbReference>
<dbReference type="PANTHER" id="PTHR31715:SF0">
    <property type="entry name" value="UREASE ACCESSORY PROTEIN G"/>
    <property type="match status" value="1"/>
</dbReference>
<dbReference type="Pfam" id="PF02492">
    <property type="entry name" value="cobW"/>
    <property type="match status" value="1"/>
</dbReference>
<dbReference type="PIRSF" id="PIRSF005624">
    <property type="entry name" value="Ni-bind_GTPase"/>
    <property type="match status" value="1"/>
</dbReference>
<dbReference type="SUPFAM" id="SSF52540">
    <property type="entry name" value="P-loop containing nucleoside triphosphate hydrolases"/>
    <property type="match status" value="1"/>
</dbReference>
<comment type="function">
    <text evidence="1">Facilitates the functional incorporation of the urease nickel metallocenter. This process requires GTP hydrolysis, probably effectuated by UreG.</text>
</comment>
<comment type="subunit">
    <text evidence="1">Homodimer. UreD, UreF and UreG form a complex that acts as a GTP-hydrolysis-dependent molecular chaperone, activating the urease apoprotein by helping to assemble the nickel containing metallocenter of UreC. The UreE protein probably delivers the nickel.</text>
</comment>
<comment type="subcellular location">
    <subcellularLocation>
        <location evidence="1">Cytoplasm</location>
    </subcellularLocation>
</comment>
<comment type="similarity">
    <text evidence="1">Belongs to the SIMIBI class G3E GTPase family. UreG subfamily.</text>
</comment>
<keyword id="KW-0143">Chaperone</keyword>
<keyword id="KW-0963">Cytoplasm</keyword>
<keyword id="KW-0342">GTP-binding</keyword>
<keyword id="KW-0996">Nickel insertion</keyword>
<keyword id="KW-0547">Nucleotide-binding</keyword>
<keyword id="KW-1185">Reference proteome</keyword>
<evidence type="ECO:0000255" key="1">
    <source>
        <dbReference type="HAMAP-Rule" id="MF_01389"/>
    </source>
</evidence>
<gene>
    <name evidence="1" type="primary">ureG</name>
    <name type="ordered locus">Bfl521</name>
</gene>
<reference key="1">
    <citation type="journal article" date="2003" name="Proc. Natl. Acad. Sci. U.S.A.">
        <title>The genome sequence of Blochmannia floridanus: comparative analysis of reduced genomes.</title>
        <authorList>
            <person name="Gil R."/>
            <person name="Silva F.J."/>
            <person name="Zientz E."/>
            <person name="Delmotte F."/>
            <person name="Gonzalez-Candelas F."/>
            <person name="Latorre A."/>
            <person name="Rausell C."/>
            <person name="Kamerbeek J."/>
            <person name="Gadau J."/>
            <person name="Hoelldobler B."/>
            <person name="van Ham R.C.H.J."/>
            <person name="Gross R."/>
            <person name="Moya A."/>
        </authorList>
    </citation>
    <scope>NUCLEOTIDE SEQUENCE [LARGE SCALE GENOMIC DNA]</scope>
</reference>
<proteinExistence type="inferred from homology"/>